<reference key="1">
    <citation type="journal article" date="2008" name="PLoS ONE">
        <title>Comparative analysis of Acinetobacters: three genomes for three lifestyles.</title>
        <authorList>
            <person name="Vallenet D."/>
            <person name="Nordmann P."/>
            <person name="Barbe V."/>
            <person name="Poirel L."/>
            <person name="Mangenot S."/>
            <person name="Bataille E."/>
            <person name="Dossat C."/>
            <person name="Gas S."/>
            <person name="Kreimeyer A."/>
            <person name="Lenoble P."/>
            <person name="Oztas S."/>
            <person name="Poulain J."/>
            <person name="Segurens B."/>
            <person name="Robert C."/>
            <person name="Abergel C."/>
            <person name="Claverie J.-M."/>
            <person name="Raoult D."/>
            <person name="Medigue C."/>
            <person name="Weissenbach J."/>
            <person name="Cruveiller S."/>
        </authorList>
    </citation>
    <scope>NUCLEOTIDE SEQUENCE [LARGE SCALE GENOMIC DNA]</scope>
    <source>
        <strain>AYE</strain>
    </source>
</reference>
<gene>
    <name evidence="1" type="primary">tatA</name>
    <name type="ordered locus">ABAYE3298</name>
</gene>
<evidence type="ECO:0000255" key="1">
    <source>
        <dbReference type="HAMAP-Rule" id="MF_00236"/>
    </source>
</evidence>
<evidence type="ECO:0000256" key="2">
    <source>
        <dbReference type="SAM" id="MobiDB-lite"/>
    </source>
</evidence>
<keyword id="KW-0997">Cell inner membrane</keyword>
<keyword id="KW-1003">Cell membrane</keyword>
<keyword id="KW-0472">Membrane</keyword>
<keyword id="KW-0653">Protein transport</keyword>
<keyword id="KW-0811">Translocation</keyword>
<keyword id="KW-0812">Transmembrane</keyword>
<keyword id="KW-1133">Transmembrane helix</keyword>
<keyword id="KW-0813">Transport</keyword>
<organism>
    <name type="scientific">Acinetobacter baumannii (strain AYE)</name>
    <dbReference type="NCBI Taxonomy" id="509173"/>
    <lineage>
        <taxon>Bacteria</taxon>
        <taxon>Pseudomonadati</taxon>
        <taxon>Pseudomonadota</taxon>
        <taxon>Gammaproteobacteria</taxon>
        <taxon>Moraxellales</taxon>
        <taxon>Moraxellaceae</taxon>
        <taxon>Acinetobacter</taxon>
        <taxon>Acinetobacter calcoaceticus/baumannii complex</taxon>
    </lineage>
</organism>
<protein>
    <recommendedName>
        <fullName evidence="1">Sec-independent protein translocase protein TatA</fullName>
    </recommendedName>
</protein>
<dbReference type="EMBL" id="CU459141">
    <property type="protein sequence ID" value="CAM88098.1"/>
    <property type="molecule type" value="Genomic_DNA"/>
</dbReference>
<dbReference type="RefSeq" id="WP_000908081.1">
    <property type="nucleotide sequence ID" value="NZ_JBDGFB010000008.1"/>
</dbReference>
<dbReference type="SMR" id="B0V4S5"/>
<dbReference type="EnsemblBacteria" id="CAM88098">
    <property type="protein sequence ID" value="CAM88098"/>
    <property type="gene ID" value="ABAYE3298"/>
</dbReference>
<dbReference type="KEGG" id="aby:ABAYE3298"/>
<dbReference type="HOGENOM" id="CLU_086034_5_3_6"/>
<dbReference type="GO" id="GO:0033281">
    <property type="term" value="C:TAT protein transport complex"/>
    <property type="evidence" value="ECO:0007669"/>
    <property type="project" value="UniProtKB-UniRule"/>
</dbReference>
<dbReference type="GO" id="GO:0008320">
    <property type="term" value="F:protein transmembrane transporter activity"/>
    <property type="evidence" value="ECO:0007669"/>
    <property type="project" value="UniProtKB-UniRule"/>
</dbReference>
<dbReference type="GO" id="GO:0043953">
    <property type="term" value="P:protein transport by the Tat complex"/>
    <property type="evidence" value="ECO:0007669"/>
    <property type="project" value="UniProtKB-UniRule"/>
</dbReference>
<dbReference type="Gene3D" id="1.20.5.3310">
    <property type="match status" value="1"/>
</dbReference>
<dbReference type="HAMAP" id="MF_00236">
    <property type="entry name" value="TatA_E"/>
    <property type="match status" value="1"/>
</dbReference>
<dbReference type="InterPro" id="IPR003369">
    <property type="entry name" value="TatA/B/E"/>
</dbReference>
<dbReference type="InterPro" id="IPR006312">
    <property type="entry name" value="TatA/E"/>
</dbReference>
<dbReference type="NCBIfam" id="TIGR01411">
    <property type="entry name" value="tatAE"/>
    <property type="match status" value="1"/>
</dbReference>
<dbReference type="PANTHER" id="PTHR42982">
    <property type="entry name" value="SEC-INDEPENDENT PROTEIN TRANSLOCASE PROTEIN TATA"/>
    <property type="match status" value="1"/>
</dbReference>
<dbReference type="PANTHER" id="PTHR42982:SF1">
    <property type="entry name" value="SEC-INDEPENDENT PROTEIN TRANSLOCASE PROTEIN TATA"/>
    <property type="match status" value="1"/>
</dbReference>
<dbReference type="Pfam" id="PF02416">
    <property type="entry name" value="TatA_B_E"/>
    <property type="match status" value="1"/>
</dbReference>
<proteinExistence type="inferred from homology"/>
<sequence length="72" mass="7747">MAGLSIWHVVIFAIVVILLFGTSKLKNIGKDVGGAVRDFKKSVREEDEAASLNSPRTIDAQVKTSESTSVKS</sequence>
<name>TATA_ACIBY</name>
<accession>B0V4S5</accession>
<feature type="chain" id="PRO_1000125177" description="Sec-independent protein translocase protein TatA">
    <location>
        <begin position="1"/>
        <end position="72"/>
    </location>
</feature>
<feature type="transmembrane region" description="Helical" evidence="1">
    <location>
        <begin position="1"/>
        <end position="21"/>
    </location>
</feature>
<feature type="region of interest" description="Disordered" evidence="2">
    <location>
        <begin position="47"/>
        <end position="72"/>
    </location>
</feature>
<feature type="compositionally biased region" description="Polar residues" evidence="2">
    <location>
        <begin position="51"/>
        <end position="72"/>
    </location>
</feature>
<comment type="function">
    <text evidence="1">Part of the twin-arginine translocation (Tat) system that transports large folded proteins containing a characteristic twin-arginine motif in their signal peptide across membranes. TatA could form the protein-conducting channel of the Tat system.</text>
</comment>
<comment type="subunit">
    <text evidence="1">The Tat system comprises two distinct complexes: a TatABC complex, containing multiple copies of TatA, TatB and TatC subunits, and a separate TatA complex, containing only TatA subunits. Substrates initially bind to the TatABC complex, which probably triggers association of the separate TatA complex to form the active translocon.</text>
</comment>
<comment type="subcellular location">
    <subcellularLocation>
        <location evidence="1">Cell inner membrane</location>
        <topology evidence="1">Single-pass membrane protein</topology>
    </subcellularLocation>
</comment>
<comment type="similarity">
    <text evidence="1">Belongs to the TatA/E family.</text>
</comment>